<dbReference type="EC" id="3.1.26.11" evidence="1"/>
<dbReference type="EMBL" id="BA000004">
    <property type="protein sequence ID" value="BAB05432.1"/>
    <property type="molecule type" value="Genomic_DNA"/>
</dbReference>
<dbReference type="PIR" id="A83864">
    <property type="entry name" value="A83864"/>
</dbReference>
<dbReference type="RefSeq" id="WP_010897874.1">
    <property type="nucleotide sequence ID" value="NC_002570.2"/>
</dbReference>
<dbReference type="SMR" id="Q9KC61"/>
<dbReference type="STRING" id="272558.gene:10727611"/>
<dbReference type="KEGG" id="bha:BH1713"/>
<dbReference type="eggNOG" id="COG1234">
    <property type="taxonomic scope" value="Bacteria"/>
</dbReference>
<dbReference type="HOGENOM" id="CLU_031317_2_0_9"/>
<dbReference type="OrthoDB" id="9800940at2"/>
<dbReference type="Proteomes" id="UP000001258">
    <property type="component" value="Chromosome"/>
</dbReference>
<dbReference type="GO" id="GO:0042781">
    <property type="term" value="F:3'-tRNA processing endoribonuclease activity"/>
    <property type="evidence" value="ECO:0007669"/>
    <property type="project" value="UniProtKB-UniRule"/>
</dbReference>
<dbReference type="GO" id="GO:0008270">
    <property type="term" value="F:zinc ion binding"/>
    <property type="evidence" value="ECO:0007669"/>
    <property type="project" value="UniProtKB-UniRule"/>
</dbReference>
<dbReference type="CDD" id="cd07717">
    <property type="entry name" value="RNaseZ_ZiPD-like_MBL-fold"/>
    <property type="match status" value="1"/>
</dbReference>
<dbReference type="FunFam" id="3.60.15.10:FF:000002">
    <property type="entry name" value="Ribonuclease Z"/>
    <property type="match status" value="1"/>
</dbReference>
<dbReference type="Gene3D" id="3.60.15.10">
    <property type="entry name" value="Ribonuclease Z/Hydroxyacylglutathione hydrolase-like"/>
    <property type="match status" value="1"/>
</dbReference>
<dbReference type="HAMAP" id="MF_01818">
    <property type="entry name" value="RNase_Z_BN"/>
    <property type="match status" value="1"/>
</dbReference>
<dbReference type="InterPro" id="IPR001279">
    <property type="entry name" value="Metallo-B-lactamas"/>
</dbReference>
<dbReference type="InterPro" id="IPR036866">
    <property type="entry name" value="RibonucZ/Hydroxyglut_hydro"/>
</dbReference>
<dbReference type="InterPro" id="IPR013471">
    <property type="entry name" value="RNase_Z/BN"/>
</dbReference>
<dbReference type="NCBIfam" id="NF000801">
    <property type="entry name" value="PRK00055.1-3"/>
    <property type="match status" value="1"/>
</dbReference>
<dbReference type="NCBIfam" id="TIGR02651">
    <property type="entry name" value="RNase_Z"/>
    <property type="match status" value="1"/>
</dbReference>
<dbReference type="PANTHER" id="PTHR46018">
    <property type="entry name" value="ZINC PHOSPHODIESTERASE ELAC PROTEIN 1"/>
    <property type="match status" value="1"/>
</dbReference>
<dbReference type="PANTHER" id="PTHR46018:SF2">
    <property type="entry name" value="ZINC PHOSPHODIESTERASE ELAC PROTEIN 1"/>
    <property type="match status" value="1"/>
</dbReference>
<dbReference type="Pfam" id="PF00753">
    <property type="entry name" value="Lactamase_B"/>
    <property type="match status" value="1"/>
</dbReference>
<dbReference type="Pfam" id="PF12706">
    <property type="entry name" value="Lactamase_B_2"/>
    <property type="match status" value="1"/>
</dbReference>
<dbReference type="SUPFAM" id="SSF56281">
    <property type="entry name" value="Metallo-hydrolase/oxidoreductase"/>
    <property type="match status" value="1"/>
</dbReference>
<sequence>MEFHFFGTGSGVPSIERNVSACAVRFLQQRGKQWLFDCGEATQHQILRSSIALGKIERIFITHLHGDHIFGLPGLLGSRSFQGGENPLFLYGPKGIRSFVETALQVSNTHVKYELTIEEFSEPGLLFHEEGFKVETILLDHVMPCYAFKVTEDDRPGELLVDRLKAKGVPPGPLYRKIQQGETVELPTGERLEANAFLGPPKRGRSFVLAGDTRPVKELIPFAKNVNVLIHEATFLDDKKGHAHEYGHSTMADAIQLAKQANVDHLILTHISSRYHDMSDELQKKAQNAFANAVVAHDFYVFHLPLAKG</sequence>
<feature type="chain" id="PRO_0000155845" description="Ribonuclease Z">
    <location>
        <begin position="1"/>
        <end position="309"/>
    </location>
</feature>
<feature type="active site" description="Proton acceptor" evidence="1">
    <location>
        <position position="67"/>
    </location>
</feature>
<feature type="binding site" evidence="1">
    <location>
        <position position="63"/>
    </location>
    <ligand>
        <name>Zn(2+)</name>
        <dbReference type="ChEBI" id="CHEBI:29105"/>
        <label>1</label>
        <note>catalytic</note>
    </ligand>
</feature>
<feature type="binding site" evidence="1">
    <location>
        <position position="65"/>
    </location>
    <ligand>
        <name>Zn(2+)</name>
        <dbReference type="ChEBI" id="CHEBI:29105"/>
        <label>1</label>
        <note>catalytic</note>
    </ligand>
</feature>
<feature type="binding site" evidence="1">
    <location>
        <position position="67"/>
    </location>
    <ligand>
        <name>Zn(2+)</name>
        <dbReference type="ChEBI" id="CHEBI:29105"/>
        <label>2</label>
        <note>catalytic</note>
    </ligand>
</feature>
<feature type="binding site" evidence="1">
    <location>
        <position position="68"/>
    </location>
    <ligand>
        <name>Zn(2+)</name>
        <dbReference type="ChEBI" id="CHEBI:29105"/>
        <label>2</label>
        <note>catalytic</note>
    </ligand>
</feature>
<feature type="binding site" evidence="1">
    <location>
        <position position="141"/>
    </location>
    <ligand>
        <name>Zn(2+)</name>
        <dbReference type="ChEBI" id="CHEBI:29105"/>
        <label>1</label>
        <note>catalytic</note>
    </ligand>
</feature>
<feature type="binding site" evidence="1">
    <location>
        <position position="212"/>
    </location>
    <ligand>
        <name>Zn(2+)</name>
        <dbReference type="ChEBI" id="CHEBI:29105"/>
        <label>1</label>
        <note>catalytic</note>
    </ligand>
</feature>
<feature type="binding site" evidence="1">
    <location>
        <position position="212"/>
    </location>
    <ligand>
        <name>Zn(2+)</name>
        <dbReference type="ChEBI" id="CHEBI:29105"/>
        <label>2</label>
        <note>catalytic</note>
    </ligand>
</feature>
<feature type="binding site" evidence="1">
    <location>
        <position position="270"/>
    </location>
    <ligand>
        <name>Zn(2+)</name>
        <dbReference type="ChEBI" id="CHEBI:29105"/>
        <label>2</label>
        <note>catalytic</note>
    </ligand>
</feature>
<gene>
    <name evidence="1" type="primary">rnz</name>
    <name type="ordered locus">BH1713</name>
</gene>
<protein>
    <recommendedName>
        <fullName evidence="1">Ribonuclease Z</fullName>
        <shortName evidence="1">RNase Z</shortName>
        <ecNumber evidence="1">3.1.26.11</ecNumber>
    </recommendedName>
    <alternativeName>
        <fullName evidence="1">tRNA 3 endonuclease</fullName>
    </alternativeName>
    <alternativeName>
        <fullName evidence="1">tRNase Z</fullName>
    </alternativeName>
</protein>
<reference key="1">
    <citation type="journal article" date="2000" name="Nucleic Acids Res.">
        <title>Complete genome sequence of the alkaliphilic bacterium Bacillus halodurans and genomic sequence comparison with Bacillus subtilis.</title>
        <authorList>
            <person name="Takami H."/>
            <person name="Nakasone K."/>
            <person name="Takaki Y."/>
            <person name="Maeno G."/>
            <person name="Sasaki R."/>
            <person name="Masui N."/>
            <person name="Fuji F."/>
            <person name="Hirama C."/>
            <person name="Nakamura Y."/>
            <person name="Ogasawara N."/>
            <person name="Kuhara S."/>
            <person name="Horikoshi K."/>
        </authorList>
    </citation>
    <scope>NUCLEOTIDE SEQUENCE [LARGE SCALE GENOMIC DNA]</scope>
    <source>
        <strain>ATCC BAA-125 / DSM 18197 / FERM 7344 / JCM 9153 / C-125</strain>
    </source>
</reference>
<proteinExistence type="inferred from homology"/>
<comment type="function">
    <text evidence="1">Zinc phosphodiesterase, which displays some tRNA 3'-processing endonuclease activity. Probably involved in tRNA maturation, by removing a 3'-trailer from precursor tRNA.</text>
</comment>
<comment type="catalytic activity">
    <reaction evidence="1">
        <text>Endonucleolytic cleavage of RNA, removing extra 3' nucleotides from tRNA precursor, generating 3' termini of tRNAs. A 3'-hydroxy group is left at the tRNA terminus and a 5'-phosphoryl group is left at the trailer molecule.</text>
        <dbReference type="EC" id="3.1.26.11"/>
    </reaction>
</comment>
<comment type="cofactor">
    <cofactor evidence="1">
        <name>Zn(2+)</name>
        <dbReference type="ChEBI" id="CHEBI:29105"/>
    </cofactor>
    <text evidence="1">Binds 2 Zn(2+) ions.</text>
</comment>
<comment type="subunit">
    <text evidence="1">Homodimer.</text>
</comment>
<comment type="similarity">
    <text evidence="1">Belongs to the RNase Z family.</text>
</comment>
<keyword id="KW-0255">Endonuclease</keyword>
<keyword id="KW-0378">Hydrolase</keyword>
<keyword id="KW-0479">Metal-binding</keyword>
<keyword id="KW-0540">Nuclease</keyword>
<keyword id="KW-1185">Reference proteome</keyword>
<keyword id="KW-0819">tRNA processing</keyword>
<keyword id="KW-0862">Zinc</keyword>
<evidence type="ECO:0000255" key="1">
    <source>
        <dbReference type="HAMAP-Rule" id="MF_01818"/>
    </source>
</evidence>
<organism>
    <name type="scientific">Halalkalibacterium halodurans (strain ATCC BAA-125 / DSM 18197 / FERM 7344 / JCM 9153 / C-125)</name>
    <name type="common">Bacillus halodurans</name>
    <dbReference type="NCBI Taxonomy" id="272558"/>
    <lineage>
        <taxon>Bacteria</taxon>
        <taxon>Bacillati</taxon>
        <taxon>Bacillota</taxon>
        <taxon>Bacilli</taxon>
        <taxon>Bacillales</taxon>
        <taxon>Bacillaceae</taxon>
        <taxon>Halalkalibacterium (ex Joshi et al. 2022)</taxon>
    </lineage>
</organism>
<name>RNZ_HALH5</name>
<accession>Q9KC61</accession>